<reference key="1">
    <citation type="journal article" date="2002" name="Nature">
        <title>Complete genome sequence of the model actinomycete Streptomyces coelicolor A3(2).</title>
        <authorList>
            <person name="Bentley S.D."/>
            <person name="Chater K.F."/>
            <person name="Cerdeno-Tarraga A.-M."/>
            <person name="Challis G.L."/>
            <person name="Thomson N.R."/>
            <person name="James K.D."/>
            <person name="Harris D.E."/>
            <person name="Quail M.A."/>
            <person name="Kieser H."/>
            <person name="Harper D."/>
            <person name="Bateman A."/>
            <person name="Brown S."/>
            <person name="Chandra G."/>
            <person name="Chen C.W."/>
            <person name="Collins M."/>
            <person name="Cronin A."/>
            <person name="Fraser A."/>
            <person name="Goble A."/>
            <person name="Hidalgo J."/>
            <person name="Hornsby T."/>
            <person name="Howarth S."/>
            <person name="Huang C.-H."/>
            <person name="Kieser T."/>
            <person name="Larke L."/>
            <person name="Murphy L.D."/>
            <person name="Oliver K."/>
            <person name="O'Neil S."/>
            <person name="Rabbinowitsch E."/>
            <person name="Rajandream M.A."/>
            <person name="Rutherford K.M."/>
            <person name="Rutter S."/>
            <person name="Seeger K."/>
            <person name="Saunders D."/>
            <person name="Sharp S."/>
            <person name="Squares R."/>
            <person name="Squares S."/>
            <person name="Taylor K."/>
            <person name="Warren T."/>
            <person name="Wietzorrek A."/>
            <person name="Woodward J.R."/>
            <person name="Barrell B.G."/>
            <person name="Parkhill J."/>
            <person name="Hopwood D.A."/>
        </authorList>
    </citation>
    <scope>NUCLEOTIDE SEQUENCE [LARGE SCALE GENOMIC DNA]</scope>
    <source>
        <strain>ATCC BAA-471 / A3(2) / M145</strain>
    </source>
</reference>
<reference key="2">
    <citation type="journal article" date="2007" name="Appl. Environ. Microbiol.">
        <title>The dasABC gene cluster, adjacent to dasR, encodes a novel ABC transporter for the uptake of N,N'-diacetylchitobiose in Streptomyces coelicolor A3(2).</title>
        <authorList>
            <person name="Saito A."/>
            <person name="Shinya T."/>
            <person name="Miyamoto K."/>
            <person name="Yokoyama T."/>
            <person name="Kaku H."/>
            <person name="Minami E."/>
            <person name="Shibuya N."/>
            <person name="Tsujibo H."/>
            <person name="Nagata Y."/>
            <person name="Ando A."/>
            <person name="Fujii T."/>
            <person name="Miyashita K."/>
        </authorList>
    </citation>
    <scope>FUNCTION</scope>
    <scope>INDUCTION</scope>
    <scope>DISRUPTION PHENOTYPE</scope>
    <source>
        <strain>ATCC BAA-471 / A3(2) / M145</strain>
    </source>
</reference>
<reference key="3">
    <citation type="journal article" date="2008" name="Microbiology">
        <title>The chitobiose-binding protein, DasA, acts as a link between chitin utilization and morphogenesis in Streptomyces coelicolor.</title>
        <authorList>
            <person name="Colson S."/>
            <person name="van Wezel G.P."/>
            <person name="Craig M."/>
            <person name="Noens E.E."/>
            <person name="Nothaft H."/>
            <person name="Mommaas A.M."/>
            <person name="Titgemeyer F."/>
            <person name="Joris B."/>
            <person name="Rigali S."/>
        </authorList>
    </citation>
    <scope>FUNCTION</scope>
    <scope>INDUCTION</scope>
    <scope>DISRUPTION PHENOTYPE</scope>
    <source>
        <strain>ATCC BAA-471 / A3(2) / M145</strain>
    </source>
</reference>
<reference key="4">
    <citation type="journal article" date="2008" name="Microbiology">
        <title>The msiK gene, encoding the ATP-hydrolysing component of N,N'-diacetylchitobiose ABC transporters, is essential for induction of chitinase production in Streptomyces coelicolor A3(2).</title>
        <authorList>
            <person name="Saito A."/>
            <person name="Fujii T."/>
            <person name="Shinya T."/>
            <person name="Shibuya N."/>
            <person name="Ando A."/>
            <person name="Miyashita K."/>
        </authorList>
    </citation>
    <scope>SUBUNIT</scope>
    <source>
        <strain>ATCC BAA-471 / A3(2) / M145</strain>
    </source>
</reference>
<organism>
    <name type="scientific">Streptomyces coelicolor (strain ATCC BAA-471 / A3(2) / M145)</name>
    <dbReference type="NCBI Taxonomy" id="100226"/>
    <lineage>
        <taxon>Bacteria</taxon>
        <taxon>Bacillati</taxon>
        <taxon>Actinomycetota</taxon>
        <taxon>Actinomycetes</taxon>
        <taxon>Kitasatosporales</taxon>
        <taxon>Streptomycetaceae</taxon>
        <taxon>Streptomyces</taxon>
        <taxon>Streptomyces albidoflavus group</taxon>
    </lineage>
</organism>
<proteinExistence type="evidence at protein level"/>
<sequence>MKRKLIAAIGIAGMMVSIAACGGDSDDDGKKAGADGYAGETLTVWVMDGSSPDDWQADLAKDFEAKTKAKVKFEIQKWNGIQQKLTTALSEENPPDVFEIGNTQTPAYAKTGGLADLSDLKGEIGTDWSESLNKSAVFDGKQYAAPWFVVNRVVVYNKKIWADAGIKELPKTRDEFYNDLKTIGEKTDAEPIYLPGQNWYHFVGLVIGEGGELVKKDGDKYVSNLADPKVAAATETYKKFQALSKAPKDKDEATPQQGEIFAKGKTGSFIGMGWEGATAIATNPAIEKDLGYFTIPGPTADKPEGVFLGGSNLAVAAGSKKQDLAKEFLKLALSDKYEGGLAKANGVIPNKEALQSNLKGNAAAEAAAPAAGTGDTTPLIPEWAAVENDPNPIKTYLTAVMKGKSPADAAKQVEGEFNKRLAQQQ</sequence>
<protein>
    <recommendedName>
        <fullName evidence="5">Diacetylchitobiose binding protein DasA</fullName>
    </recommendedName>
</protein>
<accession>Q9K491</accession>
<dbReference type="EMBL" id="AL939123">
    <property type="protein sequence ID" value="CAB94617.1"/>
    <property type="molecule type" value="Genomic_DNA"/>
</dbReference>
<dbReference type="RefSeq" id="NP_629379.1">
    <property type="nucleotide sequence ID" value="NC_003888.3"/>
</dbReference>
<dbReference type="RefSeq" id="WP_003973739.1">
    <property type="nucleotide sequence ID" value="NZ_VNID01000008.1"/>
</dbReference>
<dbReference type="SMR" id="Q9K491"/>
<dbReference type="STRING" id="100226.gene:17762883"/>
<dbReference type="PaxDb" id="100226-SCO5232"/>
<dbReference type="GeneID" id="91383793"/>
<dbReference type="KEGG" id="sco:SCO5232"/>
<dbReference type="PATRIC" id="fig|100226.15.peg.5315"/>
<dbReference type="eggNOG" id="COG2182">
    <property type="taxonomic scope" value="Bacteria"/>
</dbReference>
<dbReference type="HOGENOM" id="CLU_031285_10_1_11"/>
<dbReference type="InParanoid" id="Q9K491"/>
<dbReference type="OrthoDB" id="2507686at2"/>
<dbReference type="PhylomeDB" id="Q9K491"/>
<dbReference type="Proteomes" id="UP000001973">
    <property type="component" value="Chromosome"/>
</dbReference>
<dbReference type="GO" id="GO:0005886">
    <property type="term" value="C:plasma membrane"/>
    <property type="evidence" value="ECO:0007669"/>
    <property type="project" value="UniProtKB-SubCell"/>
</dbReference>
<dbReference type="Gene3D" id="3.40.190.10">
    <property type="entry name" value="Periplasmic binding protein-like II"/>
    <property type="match status" value="2"/>
</dbReference>
<dbReference type="InterPro" id="IPR006059">
    <property type="entry name" value="SBP"/>
</dbReference>
<dbReference type="PANTHER" id="PTHR30061">
    <property type="entry name" value="MALTOSE-BINDING PERIPLASMIC PROTEIN"/>
    <property type="match status" value="1"/>
</dbReference>
<dbReference type="PANTHER" id="PTHR30061:SF50">
    <property type="entry name" value="MALTOSE_MALTODEXTRIN-BINDING PERIPLASMIC PROTEIN"/>
    <property type="match status" value="1"/>
</dbReference>
<dbReference type="Pfam" id="PF01547">
    <property type="entry name" value="SBP_bac_1"/>
    <property type="match status" value="1"/>
</dbReference>
<dbReference type="SUPFAM" id="SSF53850">
    <property type="entry name" value="Periplasmic binding protein-like II"/>
    <property type="match status" value="1"/>
</dbReference>
<dbReference type="PROSITE" id="PS51257">
    <property type="entry name" value="PROKAR_LIPOPROTEIN"/>
    <property type="match status" value="1"/>
</dbReference>
<name>DASA_STRCO</name>
<gene>
    <name evidence="4" type="primary">dasA</name>
    <name evidence="7" type="ordered locus">SCO5232</name>
</gene>
<evidence type="ECO:0000255" key="1">
    <source>
        <dbReference type="PROSITE-ProRule" id="PRU00303"/>
    </source>
</evidence>
<evidence type="ECO:0000269" key="2">
    <source>
    </source>
</evidence>
<evidence type="ECO:0000269" key="3">
    <source>
    </source>
</evidence>
<evidence type="ECO:0000303" key="4">
    <source>
    </source>
</evidence>
<evidence type="ECO:0000305" key="5"/>
<evidence type="ECO:0000305" key="6">
    <source>
    </source>
</evidence>
<evidence type="ECO:0000312" key="7">
    <source>
        <dbReference type="EMBL" id="CAB94617.1"/>
    </source>
</evidence>
<keyword id="KW-1003">Cell membrane</keyword>
<keyword id="KW-0449">Lipoprotein</keyword>
<keyword id="KW-0472">Membrane</keyword>
<keyword id="KW-0564">Palmitate</keyword>
<keyword id="KW-1185">Reference proteome</keyword>
<keyword id="KW-0732">Signal</keyword>
<keyword id="KW-0762">Sugar transport</keyword>
<keyword id="KW-0813">Transport</keyword>
<feature type="signal peptide" evidence="1">
    <location>
        <begin position="1"/>
        <end position="20"/>
    </location>
</feature>
<feature type="chain" id="PRO_5004327847" description="Diacetylchitobiose binding protein DasA" evidence="1">
    <location>
        <begin position="21"/>
        <end position="425"/>
    </location>
</feature>
<feature type="lipid moiety-binding region" description="N-palmitoyl cysteine" evidence="1">
    <location>
        <position position="21"/>
    </location>
</feature>
<feature type="lipid moiety-binding region" description="S-diacylglycerol cysteine" evidence="1">
    <location>
        <position position="21"/>
    </location>
</feature>
<comment type="function">
    <text evidence="2 3">Part of the ABC transporter complex DasABC-MsiK involved in N,N'-diacetylchitobiose ((GlcNAc)2) uptake. Binds specifically to (GlcNAc)2. Can also bind to GlcNAc, (GlcNAc)3, (GlcNAc)4 and (GlcNAc)5, but it exhibits the highest affinity for (GlcNAc)2 (PubMed:17351098). Involved in the control of morphological differentiation (PubMed:18227241).</text>
</comment>
<comment type="subunit">
    <text evidence="6">The complex is composed of two ATP-binding proteins (MsiK), two transmembrane proteins (DasB and DasC) and a solute-binding protein (DasA).</text>
</comment>
<comment type="subcellular location">
    <subcellularLocation>
        <location evidence="1">Cell membrane</location>
        <topology evidence="1">Lipid-anchor</topology>
    </subcellularLocation>
</comment>
<comment type="induction">
    <text evidence="2 3">Strongly induced by (GlcNAc)2, (GlcNAc)3 and colloidal chitin (PubMed:17351098, PubMed:18227241). Repressed by DasR (PubMed:18227241).</text>
</comment>
<comment type="disruption phenotype">
    <text evidence="2 3">Disruption of the gene decreases (GlcNAc)2 uptake. Mutant shows higher chitinase activity (PubMed:17351098). Null mutant shows medium-dependent development, only failing to produce aerial hyphae and spores on glucose-containing media. Under conditions that allow sporulation, highly aberrant spores with many prematurely produced germ tubes are observed (PubMed:18227241).</text>
</comment>
<comment type="similarity">
    <text evidence="5">Belongs to the bacterial solute-binding protein 1 family.</text>
</comment>